<gene>
    <name evidence="1" type="primary">rimM</name>
    <name type="ordered locus">Sare_1196</name>
</gene>
<dbReference type="EMBL" id="CP000850">
    <property type="protein sequence ID" value="ABV97104.1"/>
    <property type="molecule type" value="Genomic_DNA"/>
</dbReference>
<dbReference type="SMR" id="A8M679"/>
<dbReference type="STRING" id="391037.Sare_1196"/>
<dbReference type="KEGG" id="saq:Sare_1196"/>
<dbReference type="PATRIC" id="fig|391037.6.peg.1215"/>
<dbReference type="eggNOG" id="COG0806">
    <property type="taxonomic scope" value="Bacteria"/>
</dbReference>
<dbReference type="HOGENOM" id="CLU_077636_0_0_11"/>
<dbReference type="OrthoDB" id="5381335at2"/>
<dbReference type="GO" id="GO:0005737">
    <property type="term" value="C:cytoplasm"/>
    <property type="evidence" value="ECO:0007669"/>
    <property type="project" value="UniProtKB-SubCell"/>
</dbReference>
<dbReference type="GO" id="GO:0005840">
    <property type="term" value="C:ribosome"/>
    <property type="evidence" value="ECO:0007669"/>
    <property type="project" value="InterPro"/>
</dbReference>
<dbReference type="GO" id="GO:0043022">
    <property type="term" value="F:ribosome binding"/>
    <property type="evidence" value="ECO:0007669"/>
    <property type="project" value="InterPro"/>
</dbReference>
<dbReference type="GO" id="GO:0042274">
    <property type="term" value="P:ribosomal small subunit biogenesis"/>
    <property type="evidence" value="ECO:0007669"/>
    <property type="project" value="UniProtKB-UniRule"/>
</dbReference>
<dbReference type="GO" id="GO:0006364">
    <property type="term" value="P:rRNA processing"/>
    <property type="evidence" value="ECO:0007669"/>
    <property type="project" value="UniProtKB-UniRule"/>
</dbReference>
<dbReference type="Gene3D" id="2.30.30.240">
    <property type="entry name" value="PRC-barrel domain"/>
    <property type="match status" value="1"/>
</dbReference>
<dbReference type="Gene3D" id="2.40.30.60">
    <property type="entry name" value="RimM"/>
    <property type="match status" value="1"/>
</dbReference>
<dbReference type="HAMAP" id="MF_00014">
    <property type="entry name" value="Ribosome_mat_RimM"/>
    <property type="match status" value="1"/>
</dbReference>
<dbReference type="InterPro" id="IPR011033">
    <property type="entry name" value="PRC_barrel-like_sf"/>
</dbReference>
<dbReference type="InterPro" id="IPR056792">
    <property type="entry name" value="PRC_RimM"/>
</dbReference>
<dbReference type="InterPro" id="IPR011961">
    <property type="entry name" value="RimM"/>
</dbReference>
<dbReference type="InterPro" id="IPR002676">
    <property type="entry name" value="RimM_N"/>
</dbReference>
<dbReference type="InterPro" id="IPR036976">
    <property type="entry name" value="RimM_N_sf"/>
</dbReference>
<dbReference type="InterPro" id="IPR009000">
    <property type="entry name" value="Transl_B-barrel_sf"/>
</dbReference>
<dbReference type="NCBIfam" id="TIGR02273">
    <property type="entry name" value="16S_RimM"/>
    <property type="match status" value="1"/>
</dbReference>
<dbReference type="PANTHER" id="PTHR33692">
    <property type="entry name" value="RIBOSOME MATURATION FACTOR RIMM"/>
    <property type="match status" value="1"/>
</dbReference>
<dbReference type="PANTHER" id="PTHR33692:SF1">
    <property type="entry name" value="RIBOSOME MATURATION FACTOR RIMM"/>
    <property type="match status" value="1"/>
</dbReference>
<dbReference type="Pfam" id="PF24986">
    <property type="entry name" value="PRC_RimM"/>
    <property type="match status" value="1"/>
</dbReference>
<dbReference type="Pfam" id="PF01782">
    <property type="entry name" value="RimM"/>
    <property type="match status" value="1"/>
</dbReference>
<dbReference type="SUPFAM" id="SSF50346">
    <property type="entry name" value="PRC-barrel domain"/>
    <property type="match status" value="1"/>
</dbReference>
<dbReference type="SUPFAM" id="SSF50447">
    <property type="entry name" value="Translation proteins"/>
    <property type="match status" value="1"/>
</dbReference>
<evidence type="ECO:0000255" key="1">
    <source>
        <dbReference type="HAMAP-Rule" id="MF_00014"/>
    </source>
</evidence>
<name>RIMM_SALAI</name>
<feature type="chain" id="PRO_0000351794" description="Ribosome maturation factor RimM">
    <location>
        <begin position="1"/>
        <end position="180"/>
    </location>
</feature>
<feature type="domain" description="PRC barrel" evidence="1">
    <location>
        <begin position="104"/>
        <end position="177"/>
    </location>
</feature>
<reference key="1">
    <citation type="submission" date="2007-10" db="EMBL/GenBank/DDBJ databases">
        <title>Complete sequence of Salinispora arenicola CNS-205.</title>
        <authorList>
            <consortium name="US DOE Joint Genome Institute"/>
            <person name="Copeland A."/>
            <person name="Lucas S."/>
            <person name="Lapidus A."/>
            <person name="Barry K."/>
            <person name="Glavina del Rio T."/>
            <person name="Dalin E."/>
            <person name="Tice H."/>
            <person name="Pitluck S."/>
            <person name="Foster B."/>
            <person name="Schmutz J."/>
            <person name="Larimer F."/>
            <person name="Land M."/>
            <person name="Hauser L."/>
            <person name="Kyrpides N."/>
            <person name="Ivanova N."/>
            <person name="Jensen P.R."/>
            <person name="Moore B.S."/>
            <person name="Penn K."/>
            <person name="Jenkins C."/>
            <person name="Udwary D."/>
            <person name="Xiang L."/>
            <person name="Gontang E."/>
            <person name="Richardson P."/>
        </authorList>
    </citation>
    <scope>NUCLEOTIDE SEQUENCE [LARGE SCALE GENOMIC DNA]</scope>
    <source>
        <strain>CNS-205</strain>
    </source>
</reference>
<organism>
    <name type="scientific">Salinispora arenicola (strain CNS-205)</name>
    <dbReference type="NCBI Taxonomy" id="391037"/>
    <lineage>
        <taxon>Bacteria</taxon>
        <taxon>Bacillati</taxon>
        <taxon>Actinomycetota</taxon>
        <taxon>Actinomycetes</taxon>
        <taxon>Micromonosporales</taxon>
        <taxon>Micromonosporaceae</taxon>
        <taxon>Salinispora</taxon>
    </lineage>
</organism>
<keyword id="KW-0143">Chaperone</keyword>
<keyword id="KW-0963">Cytoplasm</keyword>
<keyword id="KW-0690">Ribosome biogenesis</keyword>
<keyword id="KW-0698">rRNA processing</keyword>
<proteinExistence type="inferred from homology"/>
<accession>A8M679</accession>
<sequence length="180" mass="19262">MLVVGRIGKPHGIRGEVTVEVRTDEPETRFAPGSVLRTEPGANVPASPGAYRVPSELTVETARWHQGRLLLVAFEGVLDRNVAEALRGTFVGVDRADVTAPTDPEEFHDHQLVGLAVVTSAGERLGEIVRIDHAPAADLLVLRRPGDRDVLIPFVRAIVPEVDLAGGRVVVDPPGGLLDL</sequence>
<comment type="function">
    <text evidence="1">An accessory protein needed during the final step in the assembly of 30S ribosomal subunit, possibly for assembly of the head region. Essential for efficient processing of 16S rRNA. May be needed both before and after RbfA during the maturation of 16S rRNA. It has affinity for free ribosomal 30S subunits but not for 70S ribosomes.</text>
</comment>
<comment type="subunit">
    <text evidence="1">Binds ribosomal protein uS19.</text>
</comment>
<comment type="subcellular location">
    <subcellularLocation>
        <location evidence="1">Cytoplasm</location>
    </subcellularLocation>
</comment>
<comment type="domain">
    <text evidence="1">The PRC barrel domain binds ribosomal protein uS19.</text>
</comment>
<comment type="similarity">
    <text evidence="1">Belongs to the RimM family.</text>
</comment>
<protein>
    <recommendedName>
        <fullName evidence="1">Ribosome maturation factor RimM</fullName>
    </recommendedName>
</protein>